<accession>B0SP85</accession>
<evidence type="ECO:0000255" key="1">
    <source>
        <dbReference type="HAMAP-Rule" id="MF_01358"/>
    </source>
</evidence>
<keyword id="KW-0997">Cell inner membrane</keyword>
<keyword id="KW-1003">Cell membrane</keyword>
<keyword id="KW-0472">Membrane</keyword>
<keyword id="KW-0520">NAD</keyword>
<keyword id="KW-0874">Quinone</keyword>
<keyword id="KW-1185">Reference proteome</keyword>
<keyword id="KW-1278">Translocase</keyword>
<keyword id="KW-0813">Transport</keyword>
<keyword id="KW-0830">Ubiquinone</keyword>
<name>NUOD_LEPBP</name>
<reference key="1">
    <citation type="journal article" date="2008" name="PLoS ONE">
        <title>Genome sequence of the saprophyte Leptospira biflexa provides insights into the evolution of Leptospira and the pathogenesis of leptospirosis.</title>
        <authorList>
            <person name="Picardeau M."/>
            <person name="Bulach D.M."/>
            <person name="Bouchier C."/>
            <person name="Zuerner R.L."/>
            <person name="Zidane N."/>
            <person name="Wilson P.J."/>
            <person name="Creno S."/>
            <person name="Kuczek E.S."/>
            <person name="Bommezzadri S."/>
            <person name="Davis J.C."/>
            <person name="McGrath A."/>
            <person name="Johnson M.J."/>
            <person name="Boursaux-Eude C."/>
            <person name="Seemann T."/>
            <person name="Rouy Z."/>
            <person name="Coppel R.L."/>
            <person name="Rood J.I."/>
            <person name="Lajus A."/>
            <person name="Davies J.K."/>
            <person name="Medigue C."/>
            <person name="Adler B."/>
        </authorList>
    </citation>
    <scope>NUCLEOTIDE SEQUENCE [LARGE SCALE GENOMIC DNA]</scope>
    <source>
        <strain>Patoc 1 / ATCC 23582 / Paris</strain>
    </source>
</reference>
<gene>
    <name evidence="1" type="primary">nuoD</name>
    <name type="ordered locus">LEPBI_I1299</name>
</gene>
<feature type="chain" id="PRO_0000357835" description="NADH-quinone oxidoreductase subunit D">
    <location>
        <begin position="1"/>
        <end position="406"/>
    </location>
</feature>
<comment type="function">
    <text evidence="1">NDH-1 shuttles electrons from NADH, via FMN and iron-sulfur (Fe-S) centers, to quinones in the respiratory chain. The immediate electron acceptor for the enzyme in this species is believed to be ubiquinone. Couples the redox reaction to proton translocation (for every two electrons transferred, four hydrogen ions are translocated across the cytoplasmic membrane), and thus conserves the redox energy in a proton gradient.</text>
</comment>
<comment type="catalytic activity">
    <reaction evidence="1">
        <text>a quinone + NADH + 5 H(+)(in) = a quinol + NAD(+) + 4 H(+)(out)</text>
        <dbReference type="Rhea" id="RHEA:57888"/>
        <dbReference type="ChEBI" id="CHEBI:15378"/>
        <dbReference type="ChEBI" id="CHEBI:24646"/>
        <dbReference type="ChEBI" id="CHEBI:57540"/>
        <dbReference type="ChEBI" id="CHEBI:57945"/>
        <dbReference type="ChEBI" id="CHEBI:132124"/>
    </reaction>
</comment>
<comment type="subunit">
    <text evidence="1">NDH-1 is composed of 14 different subunits. Subunits NuoB, C, D, E, F, and G constitute the peripheral sector of the complex.</text>
</comment>
<comment type="subcellular location">
    <subcellularLocation>
        <location evidence="1">Cell inner membrane</location>
        <topology evidence="1">Peripheral membrane protein</topology>
        <orientation evidence="1">Cytoplasmic side</orientation>
    </subcellularLocation>
</comment>
<comment type="similarity">
    <text evidence="1">Belongs to the complex I 49 kDa subunit family.</text>
</comment>
<protein>
    <recommendedName>
        <fullName evidence="1">NADH-quinone oxidoreductase subunit D</fullName>
        <ecNumber evidence="1">7.1.1.-</ecNumber>
    </recommendedName>
    <alternativeName>
        <fullName evidence="1">NADH dehydrogenase I subunit D</fullName>
    </alternativeName>
    <alternativeName>
        <fullName evidence="1">NDH-1 subunit D</fullName>
    </alternativeName>
</protein>
<proteinExistence type="inferred from homology"/>
<sequence length="406" mass="46379">MVMYEKTAEHFGQKFKDLPEGHLLVNLGPSHPATHGILQNVIQIDGERVVDTESVIGYVHRCFEKLGERYDYNQFLVCTDRMNYVSTPLNNIGWILTVEKMMQIQVPDRVTYVRMIISELSRIMDHIICNGIMGVDLGAFSGLLHLFHHRENIYQILEKLTGARLTTTFCRVGGMERDIYPEFQTEIKLILKGLKPALDEFEELLIRNKIFNERTKGIGGISADRAIAYGFSGPNLRAAGVPWDVRKDDPYMFYDKVNFDIPVGEDGSALDRTLVRMEEMRQSMKIIEQLIDGIPEGPYHADVPHSFLPPKDRVYHNMEELIYHFKIIMHGVKVPPGEYYHATEAANGELGFYVVSEGDKSPWRVHVRRPCFWYYQAFPEMVKGGLLADTIATMSSLNVIAGELDC</sequence>
<organism>
    <name type="scientific">Leptospira biflexa serovar Patoc (strain Patoc 1 / ATCC 23582 / Paris)</name>
    <dbReference type="NCBI Taxonomy" id="456481"/>
    <lineage>
        <taxon>Bacteria</taxon>
        <taxon>Pseudomonadati</taxon>
        <taxon>Spirochaetota</taxon>
        <taxon>Spirochaetia</taxon>
        <taxon>Leptospirales</taxon>
        <taxon>Leptospiraceae</taxon>
        <taxon>Leptospira</taxon>
    </lineage>
</organism>
<dbReference type="EC" id="7.1.1.-" evidence="1"/>
<dbReference type="EMBL" id="CP000786">
    <property type="protein sequence ID" value="ABZ97409.1"/>
    <property type="molecule type" value="Genomic_DNA"/>
</dbReference>
<dbReference type="SMR" id="B0SP85"/>
<dbReference type="STRING" id="456481.LEPBI_I1299"/>
<dbReference type="KEGG" id="lbi:LEPBI_I1299"/>
<dbReference type="HOGENOM" id="CLU_015134_1_2_12"/>
<dbReference type="Proteomes" id="UP000001847">
    <property type="component" value="Chromosome I"/>
</dbReference>
<dbReference type="GO" id="GO:0005886">
    <property type="term" value="C:plasma membrane"/>
    <property type="evidence" value="ECO:0007669"/>
    <property type="project" value="UniProtKB-SubCell"/>
</dbReference>
<dbReference type="GO" id="GO:0051287">
    <property type="term" value="F:NAD binding"/>
    <property type="evidence" value="ECO:0007669"/>
    <property type="project" value="InterPro"/>
</dbReference>
<dbReference type="GO" id="GO:0050136">
    <property type="term" value="F:NADH:ubiquinone reductase (non-electrogenic) activity"/>
    <property type="evidence" value="ECO:0007669"/>
    <property type="project" value="UniProtKB-UniRule"/>
</dbReference>
<dbReference type="GO" id="GO:0048038">
    <property type="term" value="F:quinone binding"/>
    <property type="evidence" value="ECO:0007669"/>
    <property type="project" value="UniProtKB-KW"/>
</dbReference>
<dbReference type="Gene3D" id="1.10.645.10">
    <property type="entry name" value="Cytochrome-c3 Hydrogenase, chain B"/>
    <property type="match status" value="1"/>
</dbReference>
<dbReference type="HAMAP" id="MF_01358">
    <property type="entry name" value="NDH1_NuoD"/>
    <property type="match status" value="1"/>
</dbReference>
<dbReference type="InterPro" id="IPR001135">
    <property type="entry name" value="NADH_Q_OxRdtase_suD"/>
</dbReference>
<dbReference type="InterPro" id="IPR022885">
    <property type="entry name" value="NDH1_su_D/H"/>
</dbReference>
<dbReference type="InterPro" id="IPR029014">
    <property type="entry name" value="NiFe-Hase_large"/>
</dbReference>
<dbReference type="NCBIfam" id="NF004739">
    <property type="entry name" value="PRK06075.1"/>
    <property type="match status" value="1"/>
</dbReference>
<dbReference type="PANTHER" id="PTHR11993:SF10">
    <property type="entry name" value="NADH DEHYDROGENASE [UBIQUINONE] IRON-SULFUR PROTEIN 2, MITOCHONDRIAL"/>
    <property type="match status" value="1"/>
</dbReference>
<dbReference type="PANTHER" id="PTHR11993">
    <property type="entry name" value="NADH-UBIQUINONE OXIDOREDUCTASE 49 KDA SUBUNIT"/>
    <property type="match status" value="1"/>
</dbReference>
<dbReference type="Pfam" id="PF00346">
    <property type="entry name" value="Complex1_49kDa"/>
    <property type="match status" value="1"/>
</dbReference>
<dbReference type="SUPFAM" id="SSF56762">
    <property type="entry name" value="HydB/Nqo4-like"/>
    <property type="match status" value="1"/>
</dbReference>